<feature type="chain" id="PRO_0000094041" description="Stomatin-3">
    <location>
        <begin position="1"/>
        <end position="267"/>
    </location>
</feature>
<feature type="transmembrane region" description="Helical" evidence="1">
    <location>
        <begin position="17"/>
        <end position="37"/>
    </location>
</feature>
<proteinExistence type="inferred from homology"/>
<name>STO3_CAEEL</name>
<sequence>MIGREYQKYYTPTFFDFVALICAWAFLLLTFPVSIFFCVKIVKEYDRMVIFRLGRLWQDNPRGPGIVLVLPFIDSHKTVDLRVMSYDVPTQEMLTRDSVTIGVDAAVYYRTSDPIASLARVNDAHMSTRQLAQSSLRNVLGTRSLAELMTDRHGIAVQVKYILDSATLFWGIHVERVEIKDIRLPREMCRAMAAEAEAQRESDAKVVTAQGELDASMAFQKAADELAGSPTALQLRYLQTLVKISAHDNHTIVVPFPMEYIKKKIRK</sequence>
<keyword id="KW-0472">Membrane</keyword>
<keyword id="KW-1185">Reference proteome</keyword>
<keyword id="KW-0812">Transmembrane</keyword>
<keyword id="KW-1133">Transmembrane helix</keyword>
<accession>Q20657</accession>
<organism>
    <name type="scientific">Caenorhabditis elegans</name>
    <dbReference type="NCBI Taxonomy" id="6239"/>
    <lineage>
        <taxon>Eukaryota</taxon>
        <taxon>Metazoa</taxon>
        <taxon>Ecdysozoa</taxon>
        <taxon>Nematoda</taxon>
        <taxon>Chromadorea</taxon>
        <taxon>Rhabditida</taxon>
        <taxon>Rhabditina</taxon>
        <taxon>Rhabditomorpha</taxon>
        <taxon>Rhabditoidea</taxon>
        <taxon>Rhabditidae</taxon>
        <taxon>Peloderinae</taxon>
        <taxon>Caenorhabditis</taxon>
    </lineage>
</organism>
<gene>
    <name type="primary">sto-3</name>
    <name type="ORF">F52D10.5</name>
</gene>
<dbReference type="EMBL" id="Z66564">
    <property type="protein sequence ID" value="CAA91476.1"/>
    <property type="molecule type" value="Genomic_DNA"/>
</dbReference>
<dbReference type="PIR" id="T22502">
    <property type="entry name" value="T22502"/>
</dbReference>
<dbReference type="RefSeq" id="NP_509941.1">
    <property type="nucleotide sequence ID" value="NM_077540.2"/>
</dbReference>
<dbReference type="SMR" id="Q20657"/>
<dbReference type="FunCoup" id="Q20657">
    <property type="interactions" value="92"/>
</dbReference>
<dbReference type="STRING" id="6239.F52D10.5.1"/>
<dbReference type="PaxDb" id="6239-F52D10.5"/>
<dbReference type="EnsemblMetazoa" id="F52D10.5.1">
    <property type="protein sequence ID" value="F52D10.5.1"/>
    <property type="gene ID" value="WBGene00006065"/>
</dbReference>
<dbReference type="GeneID" id="191966"/>
<dbReference type="KEGG" id="cel:CELE_F52D10.5"/>
<dbReference type="UCSC" id="F52D10.5">
    <property type="organism name" value="c. elegans"/>
</dbReference>
<dbReference type="AGR" id="WB:WBGene00006065"/>
<dbReference type="CTD" id="191966"/>
<dbReference type="WormBase" id="F52D10.5">
    <property type="protein sequence ID" value="CE03391"/>
    <property type="gene ID" value="WBGene00006065"/>
    <property type="gene designation" value="sto-3"/>
</dbReference>
<dbReference type="eggNOG" id="KOG2621">
    <property type="taxonomic scope" value="Eukaryota"/>
</dbReference>
<dbReference type="GeneTree" id="ENSGT01030000234614"/>
<dbReference type="HOGENOM" id="CLU_024949_3_0_1"/>
<dbReference type="InParanoid" id="Q20657"/>
<dbReference type="OMA" id="FWGIHVE"/>
<dbReference type="OrthoDB" id="2105077at2759"/>
<dbReference type="PhylomeDB" id="Q20657"/>
<dbReference type="Reactome" id="R-CEL-2672351">
    <property type="pathway name" value="Stimuli-sensing channels"/>
</dbReference>
<dbReference type="Reactome" id="R-CEL-373753">
    <property type="pathway name" value="Nephrin family interactions"/>
</dbReference>
<dbReference type="PRO" id="PR:Q20657"/>
<dbReference type="Proteomes" id="UP000001940">
    <property type="component" value="Chromosome X"/>
</dbReference>
<dbReference type="Bgee" id="WBGene00006065">
    <property type="expression patterns" value="Expressed in larva and 1 other cell type or tissue"/>
</dbReference>
<dbReference type="GO" id="GO:0005886">
    <property type="term" value="C:plasma membrane"/>
    <property type="evidence" value="ECO:0000318"/>
    <property type="project" value="GO_Central"/>
</dbReference>
<dbReference type="FunFam" id="3.30.479.30:FF:000004">
    <property type="entry name" value="Putative membrane protease family, stomatin"/>
    <property type="match status" value="1"/>
</dbReference>
<dbReference type="Gene3D" id="6.10.250.2090">
    <property type="match status" value="1"/>
</dbReference>
<dbReference type="Gene3D" id="3.30.479.30">
    <property type="entry name" value="Band 7 domain"/>
    <property type="match status" value="1"/>
</dbReference>
<dbReference type="InterPro" id="IPR043202">
    <property type="entry name" value="Band-7_stomatin-like"/>
</dbReference>
<dbReference type="InterPro" id="IPR001107">
    <property type="entry name" value="Band_7"/>
</dbReference>
<dbReference type="InterPro" id="IPR036013">
    <property type="entry name" value="Band_7/SPFH_dom_sf"/>
</dbReference>
<dbReference type="InterPro" id="IPR018080">
    <property type="entry name" value="Band_7/stomatin-like_CS"/>
</dbReference>
<dbReference type="InterPro" id="IPR001972">
    <property type="entry name" value="Stomatin_HflK_fam"/>
</dbReference>
<dbReference type="PANTHER" id="PTHR10264">
    <property type="entry name" value="BAND 7 PROTEIN-RELATED"/>
    <property type="match status" value="1"/>
</dbReference>
<dbReference type="PANTHER" id="PTHR10264:SF116">
    <property type="entry name" value="STOMATIN-3"/>
    <property type="match status" value="1"/>
</dbReference>
<dbReference type="Pfam" id="PF01145">
    <property type="entry name" value="Band_7"/>
    <property type="match status" value="1"/>
</dbReference>
<dbReference type="PRINTS" id="PR00721">
    <property type="entry name" value="STOMATIN"/>
</dbReference>
<dbReference type="SMART" id="SM00244">
    <property type="entry name" value="PHB"/>
    <property type="match status" value="1"/>
</dbReference>
<dbReference type="SUPFAM" id="SSF117892">
    <property type="entry name" value="Band 7/SPFH domain"/>
    <property type="match status" value="1"/>
</dbReference>
<dbReference type="PROSITE" id="PS01270">
    <property type="entry name" value="BAND_7"/>
    <property type="match status" value="1"/>
</dbReference>
<reference key="1">
    <citation type="journal article" date="1998" name="Science">
        <title>Genome sequence of the nematode C. elegans: a platform for investigating biology.</title>
        <authorList>
            <consortium name="The C. elegans sequencing consortium"/>
        </authorList>
    </citation>
    <scope>NUCLEOTIDE SEQUENCE [LARGE SCALE GENOMIC DNA]</scope>
    <source>
        <strain>Bristol N2</strain>
    </source>
</reference>
<protein>
    <recommendedName>
        <fullName>Stomatin-3</fullName>
    </recommendedName>
</protein>
<evidence type="ECO:0000255" key="1"/>
<evidence type="ECO:0000305" key="2"/>
<comment type="subcellular location">
    <subcellularLocation>
        <location evidence="2">Membrane</location>
        <topology evidence="2">Single-pass membrane protein</topology>
    </subcellularLocation>
</comment>
<comment type="similarity">
    <text evidence="2">Belongs to the band 7/mec-2 family.</text>
</comment>